<gene>
    <name type="primary">IDH3B</name>
</gene>
<protein>
    <recommendedName>
        <fullName>Isocitrate dehydrogenase [NAD] subunit beta, mitochondrial</fullName>
    </recommendedName>
    <alternativeName>
        <fullName>Isocitric dehydrogenase subunit beta</fullName>
    </alternativeName>
    <alternativeName>
        <fullName>NAD(+)-isocitrate dehydrogenase subunit 1</fullName>
        <shortName>IDH1</shortName>
    </alternativeName>
    <alternativeName>
        <fullName>NAD(+)-specific ICDH subunit beta</fullName>
    </alternativeName>
</protein>
<keyword id="KW-0007">Acetylation</keyword>
<keyword id="KW-0025">Alternative splicing</keyword>
<keyword id="KW-0496">Mitochondrion</keyword>
<keyword id="KW-1185">Reference proteome</keyword>
<keyword id="KW-0809">Transit peptide</keyword>
<keyword id="KW-0816">Tricarboxylic acid cycle</keyword>
<sequence>MAALSRVRWLTRALVAAPNPGAWRSLCTSTVAQASSRTQGEDVRVEGAFPVTMLPGDGVGPELMHAVKEVFKAASVPVEFQEHHLSEVQNMASEEKLEQVLSSMKENKVAIIGKIHTPMEYKGELASYDMRLRRKLDLFANVVHVKSLPGYKTRHNNLDLVIIREQTEGEYSSLEHESARGVIECLKIVTRTKSQRIAKFAFDYATKKGRGKVTAVHKANIMKLGDGLFLQCCEEVAELYPKIKFEKMIIDNCCMQLVQNPYQFDVLVMPNLYGNIIDNLAAGLVGGAGVVPGESYSAEYAVFETGARHPFAQAVGRNIANPTAMLLSASNMLRHLNLEHHSNMIAEAVKKVIKVGKVRTRDMGGYSTTTDFIKSVIGHLHPYGG</sequence>
<proteinExistence type="evidence at transcript level"/>
<name>IDH3B_BOVIN</name>
<accession>O77784</accession>
<accession>O77785</accession>
<accession>Q3MI01</accession>
<dbReference type="EMBL" id="AF090321">
    <property type="protein sequence ID" value="AAC83166.1"/>
    <property type="molecule type" value="mRNA"/>
</dbReference>
<dbReference type="EMBL" id="AF090322">
    <property type="protein sequence ID" value="AAC83167.1"/>
    <property type="molecule type" value="mRNA"/>
</dbReference>
<dbReference type="EMBL" id="BC104502">
    <property type="protein sequence ID" value="AAI04503.1"/>
    <property type="molecule type" value="mRNA"/>
</dbReference>
<dbReference type="PIR" id="S58432">
    <property type="entry name" value="S58432"/>
</dbReference>
<dbReference type="RefSeq" id="NP_001139344.1">
    <molecule id="O77784-1"/>
    <property type="nucleotide sequence ID" value="NM_001145872.1"/>
</dbReference>
<dbReference type="RefSeq" id="NP_001161346.1">
    <molecule id="O77784-2"/>
    <property type="nucleotide sequence ID" value="NM_001167874.1"/>
</dbReference>
<dbReference type="SMR" id="O77784"/>
<dbReference type="BioGRID" id="541068">
    <property type="interactions" value="1"/>
</dbReference>
<dbReference type="FunCoup" id="O77784">
    <property type="interactions" value="2968"/>
</dbReference>
<dbReference type="STRING" id="9913.ENSBTAP00000042833"/>
<dbReference type="GlyGen" id="O77784">
    <property type="glycosylation" value="1 site, 1 O-linked glycan (1 site)"/>
</dbReference>
<dbReference type="PaxDb" id="9913-ENSBTAP00000025044"/>
<dbReference type="Ensembl" id="ENSBTAT00000025044.4">
    <molecule id="O77784-1"/>
    <property type="protein sequence ID" value="ENSBTAP00000025044.3"/>
    <property type="gene ID" value="ENSBTAG00000018813.7"/>
</dbReference>
<dbReference type="Ensembl" id="ENSBTAT00000045446.5">
    <molecule id="O77784-2"/>
    <property type="protein sequence ID" value="ENSBTAP00000042833.4"/>
    <property type="gene ID" value="ENSBTAG00000018813.7"/>
</dbReference>
<dbReference type="GeneID" id="613338"/>
<dbReference type="KEGG" id="bta:613338"/>
<dbReference type="CTD" id="3420"/>
<dbReference type="VEuPathDB" id="HostDB:ENSBTAG00000018813"/>
<dbReference type="eggNOG" id="KOG0784">
    <property type="taxonomic scope" value="Eukaryota"/>
</dbReference>
<dbReference type="GeneTree" id="ENSGT00950000182989"/>
<dbReference type="HOGENOM" id="CLU_031953_0_1_1"/>
<dbReference type="InParanoid" id="O77784"/>
<dbReference type="OMA" id="TCAHKAN"/>
<dbReference type="OrthoDB" id="10261637at2759"/>
<dbReference type="TreeFam" id="TF315033"/>
<dbReference type="Reactome" id="R-BTA-71403">
    <property type="pathway name" value="Citric acid cycle (TCA cycle)"/>
</dbReference>
<dbReference type="SABIO-RK" id="O77784"/>
<dbReference type="Proteomes" id="UP000009136">
    <property type="component" value="Chromosome 13"/>
</dbReference>
<dbReference type="Bgee" id="ENSBTAG00000018813">
    <property type="expression patterns" value="Expressed in corpus luteum and 104 other cell types or tissues"/>
</dbReference>
<dbReference type="GO" id="GO:0045242">
    <property type="term" value="C:isocitrate dehydrogenase complex (NAD+)"/>
    <property type="evidence" value="ECO:0007669"/>
    <property type="project" value="Ensembl"/>
</dbReference>
<dbReference type="GO" id="GO:0005739">
    <property type="term" value="C:mitochondrion"/>
    <property type="evidence" value="ECO:0000318"/>
    <property type="project" value="GO_Central"/>
</dbReference>
<dbReference type="GO" id="GO:0000287">
    <property type="term" value="F:magnesium ion binding"/>
    <property type="evidence" value="ECO:0007669"/>
    <property type="project" value="InterPro"/>
</dbReference>
<dbReference type="GO" id="GO:0051287">
    <property type="term" value="F:NAD binding"/>
    <property type="evidence" value="ECO:0007669"/>
    <property type="project" value="InterPro"/>
</dbReference>
<dbReference type="GO" id="GO:0016616">
    <property type="term" value="F:oxidoreductase activity, acting on the CH-OH group of donors, NAD or NADP as acceptor"/>
    <property type="evidence" value="ECO:0007669"/>
    <property type="project" value="InterPro"/>
</dbReference>
<dbReference type="GO" id="GO:0006102">
    <property type="term" value="P:isocitrate metabolic process"/>
    <property type="evidence" value="ECO:0000318"/>
    <property type="project" value="GO_Central"/>
</dbReference>
<dbReference type="GO" id="GO:0006099">
    <property type="term" value="P:tricarboxylic acid cycle"/>
    <property type="evidence" value="ECO:0000318"/>
    <property type="project" value="GO_Central"/>
</dbReference>
<dbReference type="FunFam" id="3.40.718.10:FF:000001">
    <property type="entry name" value="Isocitrate dehydrogenase [NAD] subunit, mitochondrial"/>
    <property type="match status" value="1"/>
</dbReference>
<dbReference type="Gene3D" id="3.40.718.10">
    <property type="entry name" value="Isopropylmalate Dehydrogenase"/>
    <property type="match status" value="1"/>
</dbReference>
<dbReference type="InterPro" id="IPR019818">
    <property type="entry name" value="IsoCit/isopropylmalate_DH_CS"/>
</dbReference>
<dbReference type="InterPro" id="IPR004434">
    <property type="entry name" value="Isocitrate_DH_NAD"/>
</dbReference>
<dbReference type="InterPro" id="IPR024084">
    <property type="entry name" value="IsoPropMal-DH-like_dom"/>
</dbReference>
<dbReference type="NCBIfam" id="TIGR00175">
    <property type="entry name" value="mito_nad_idh"/>
    <property type="match status" value="1"/>
</dbReference>
<dbReference type="PANTHER" id="PTHR11835">
    <property type="entry name" value="DECARBOXYLATING DEHYDROGENASES-ISOCITRATE, ISOPROPYLMALATE, TARTRATE"/>
    <property type="match status" value="1"/>
</dbReference>
<dbReference type="PANTHER" id="PTHR11835:SF42">
    <property type="entry name" value="ISOCITRATE DEHYDROGENASE [NAD] SUBUNIT BETA, MITOCHONDRIAL"/>
    <property type="match status" value="1"/>
</dbReference>
<dbReference type="Pfam" id="PF00180">
    <property type="entry name" value="Iso_dh"/>
    <property type="match status" value="1"/>
</dbReference>
<dbReference type="SMART" id="SM01329">
    <property type="entry name" value="Iso_dh"/>
    <property type="match status" value="1"/>
</dbReference>
<dbReference type="SUPFAM" id="SSF53659">
    <property type="entry name" value="Isocitrate/Isopropylmalate dehydrogenase-like"/>
    <property type="match status" value="1"/>
</dbReference>
<dbReference type="PROSITE" id="PS00470">
    <property type="entry name" value="IDH_IMDH"/>
    <property type="match status" value="1"/>
</dbReference>
<feature type="transit peptide" description="Mitochondrion" evidence="1">
    <location>
        <begin position="1"/>
        <end position="33"/>
    </location>
</feature>
<feature type="chain" id="PRO_0000014443" description="Isocitrate dehydrogenase [NAD] subunit beta, mitochondrial">
    <location>
        <begin position="34"/>
        <end position="385"/>
    </location>
</feature>
<feature type="modified residue" description="N6-acetyllysine" evidence="2">
    <location>
        <position position="199"/>
    </location>
</feature>
<feature type="splice variant" id="VSP_002461" description="In isoform A." evidence="3">
    <original>RDMGGYSTTTDFIKSVIGHLHPYGG</original>
    <variation>SDMGGYATCQDFTEAVIGALSNP</variation>
    <location>
        <begin position="361"/>
        <end position="385"/>
    </location>
</feature>
<comment type="function">
    <text evidence="2">Plays a structural role to facilitate the assembly and ensure the full activity of the enzyme catalyzing the decarboxylation of isocitrate (ICT) into alpha-ketoglutarate. The heterodimer composed of the alpha (IDH3A) and beta (IDH3B) subunits and the heterodimer composed of the alpha (IDH3A) and gamma (IDH3G) subunits, have considerable basal activity but the full activity of the heterotetramer (containing two subunits of IDH3A, one of IDH3B and one of IDH3G) requires the assembly and cooperative function of both heterodimers.</text>
</comment>
<comment type="activity regulation">
    <text evidence="2">The heterotetramer and the heterodimer composed of IDH3A and IDH3G subunits can be allosterically activated by citrate (CIT) or/and ADP, and the two activators can act independently or synergistically. The heterodimer composed of IDH3A and IDH3B subunits cannot be allosterically regulated and the allosteric regulation of the heterotetramer is through the IDH3G subunit and not the IDH3B subunit. The IDH3G subunit contains the allosteric site which consists of a CIT-binding site and an ADP-binding site, and the binding of CIT and ADP causes conformational changes at the allosteric site which are transmitted to the active site in the catalytic subunit (IDH3A) through a cascade of conformational changes at the heterodimer interface, leading to stabilization of the isocitrate-binding at the active site and thus activation of the enzyme. ATP can activate the heterotetramer and the heterodimer composed of IDH3A and IDH3G subunits at low concentrations but inhibits their activities at high concentrations, whereas ATP exhibits only inhibitory effect on the heterodimer composed of IDH3A and IDH3B subunits.</text>
</comment>
<comment type="subunit">
    <text evidence="2">Heterooligomer of subunits alpha (IDH3A), beta (IDH3B), and gamma (IDH3G) in the apparent ratio of 2:1:1. The heterodimer containing one IDH3A and one IDH3B subunit and the heterodimer containing one IDH3A and one IDH3G subunit assemble into a heterotetramer (which contains two subunits of IDH3A, one of IDH3B and one of IDH3G) and further into the heterooctamer.</text>
</comment>
<comment type="subcellular location">
    <subcellularLocation>
        <location>Mitochondrion</location>
    </subcellularLocation>
</comment>
<comment type="alternative products">
    <event type="alternative splicing"/>
    <isoform>
        <id>O77784-1</id>
        <name>B</name>
        <sequence type="displayed"/>
    </isoform>
    <isoform>
        <id>O77784-2</id>
        <name>A</name>
        <sequence type="described" ref="VSP_002461"/>
    </isoform>
</comment>
<comment type="tissue specificity">
    <text>Isoform A is predominant in heart muscle; also found in brain, kidney and liver. Isoform B is present in kidney and liver.</text>
</comment>
<comment type="similarity">
    <text evidence="4">Belongs to the isocitrate and isopropylmalate dehydrogenases family.</text>
</comment>
<evidence type="ECO:0000250" key="1"/>
<evidence type="ECO:0000250" key="2">
    <source>
        <dbReference type="UniProtKB" id="O43837"/>
    </source>
</evidence>
<evidence type="ECO:0000303" key="3">
    <source>
    </source>
</evidence>
<evidence type="ECO:0000305" key="4"/>
<organism>
    <name type="scientific">Bos taurus</name>
    <name type="common">Bovine</name>
    <dbReference type="NCBI Taxonomy" id="9913"/>
    <lineage>
        <taxon>Eukaryota</taxon>
        <taxon>Metazoa</taxon>
        <taxon>Chordata</taxon>
        <taxon>Craniata</taxon>
        <taxon>Vertebrata</taxon>
        <taxon>Euteleostomi</taxon>
        <taxon>Mammalia</taxon>
        <taxon>Eutheria</taxon>
        <taxon>Laurasiatheria</taxon>
        <taxon>Artiodactyla</taxon>
        <taxon>Ruminantia</taxon>
        <taxon>Pecora</taxon>
        <taxon>Bovidae</taxon>
        <taxon>Bovinae</taxon>
        <taxon>Bos</taxon>
    </lineage>
</organism>
<reference key="1">
    <citation type="journal article" date="2000" name="Biochemistry">
        <title>Bovine NAD+-dependent isocitrate dehydrogenase: alternative splicing and tissue-dependent expression of subunit 1.</title>
        <authorList>
            <person name="Weiss C."/>
            <person name="Zeng Y."/>
            <person name="Huang J."/>
            <person name="Sobocka M.B."/>
            <person name="Rushbrook J.I."/>
        </authorList>
    </citation>
    <scope>NUCLEOTIDE SEQUENCE [MRNA] (ISOFORMS A AND B)</scope>
</reference>
<reference key="2">
    <citation type="submission" date="2005-09" db="EMBL/GenBank/DDBJ databases">
        <authorList>
            <consortium name="NIH - Mammalian Gene Collection (MGC) project"/>
        </authorList>
    </citation>
    <scope>NUCLEOTIDE SEQUENCE [LARGE SCALE MRNA] OF 2-385 (ISOFORM B)</scope>
    <source>
        <strain>Hereford</strain>
        <tissue>Ascending colon</tissue>
    </source>
</reference>